<protein>
    <recommendedName>
        <fullName evidence="12">Polyketide transferase af380</fullName>
        <ecNumber evidence="5">2.3.1.-</ecNumber>
    </recommendedName>
    <alternativeName>
        <fullName evidence="10">Fumagillin biosynthesis acyltransferase</fullName>
        <shortName evidence="10">Fma-AT</shortName>
    </alternativeName>
</protein>
<sequence length="292" mass="32697">MNREDVEFPTCDGLILRGWLYPGTIRGPAIVMNQGFNTPKEILLPDVAVWFQQQGVTVLLYDNRCIGASDGEPRNDVKPAKLVEDFHDALTFMARHPMVDEDKIILYGYSFSAMTALVAAGLDHRVGAAISVTPIANYDFREKEKNNVMALAMQDRVSTLAGNDPVYIPFVGDDGYNPAGWGNQYNMEQFRAFLGTSFFTNRTTVQSYYHVLAWQPYGAMRLIKGTPVMMVTPAEDTISSPADQRAVFDMIPEPNKEFDLVAGRGHMDVINGEGAEEVLQRQLAFMRKHLDF</sequence>
<organism>
    <name type="scientific">Aspergillus fumigatus (strain ATCC MYA-4609 / CBS 101355 / FGSC A1100 / Af293)</name>
    <name type="common">Neosartorya fumigata</name>
    <dbReference type="NCBI Taxonomy" id="330879"/>
    <lineage>
        <taxon>Eukaryota</taxon>
        <taxon>Fungi</taxon>
        <taxon>Dikarya</taxon>
        <taxon>Ascomycota</taxon>
        <taxon>Pezizomycotina</taxon>
        <taxon>Eurotiomycetes</taxon>
        <taxon>Eurotiomycetidae</taxon>
        <taxon>Eurotiales</taxon>
        <taxon>Aspergillaceae</taxon>
        <taxon>Aspergillus</taxon>
        <taxon>Aspergillus subgen. Fumigati</taxon>
    </lineage>
</organism>
<gene>
    <name evidence="10" type="primary">af380</name>
    <name evidence="11" type="synonym">fmaC</name>
    <name type="ORF">AFUA_8G00380</name>
</gene>
<evidence type="ECO:0000255" key="1"/>
<evidence type="ECO:0000269" key="2">
    <source>
    </source>
</evidence>
<evidence type="ECO:0000269" key="3">
    <source>
    </source>
</evidence>
<evidence type="ECO:0000269" key="4">
    <source>
    </source>
</evidence>
<evidence type="ECO:0000269" key="5">
    <source>
    </source>
</evidence>
<evidence type="ECO:0000269" key="6">
    <source>
    </source>
</evidence>
<evidence type="ECO:0000269" key="7">
    <source>
    </source>
</evidence>
<evidence type="ECO:0000269" key="8">
    <source>
    </source>
</evidence>
<evidence type="ECO:0000269" key="9">
    <source>
    </source>
</evidence>
<evidence type="ECO:0000303" key="10">
    <source>
    </source>
</evidence>
<evidence type="ECO:0000303" key="11">
    <source>
    </source>
</evidence>
<evidence type="ECO:0000305" key="12"/>
<evidence type="ECO:0000305" key="13">
    <source>
    </source>
</evidence>
<feature type="chain" id="PRO_0000437040" description="Polyketide transferase af380">
    <location>
        <begin position="1"/>
        <end position="292"/>
    </location>
</feature>
<feature type="region of interest" description="Abhydrolase domain" evidence="1">
    <location>
        <begin position="46"/>
        <end position="267"/>
    </location>
</feature>
<dbReference type="EC" id="2.3.1.-" evidence="5"/>
<dbReference type="EMBL" id="AAHF01000014">
    <property type="protein sequence ID" value="EAL85128.1"/>
    <property type="molecule type" value="Genomic_DNA"/>
</dbReference>
<dbReference type="RefSeq" id="XP_747166.1">
    <property type="nucleotide sequence ID" value="XM_742073.1"/>
</dbReference>
<dbReference type="SMR" id="Q4WAY4"/>
<dbReference type="STRING" id="330879.Q4WAY4"/>
<dbReference type="ESTHER" id="aspfu-fmac">
    <property type="family name" value="Thiohydrolase"/>
</dbReference>
<dbReference type="EnsemblFungi" id="EAL85128">
    <property type="protein sequence ID" value="EAL85128"/>
    <property type="gene ID" value="AFUA_8G00380"/>
</dbReference>
<dbReference type="GeneID" id="3504548"/>
<dbReference type="KEGG" id="afm:AFUA_8G00380"/>
<dbReference type="VEuPathDB" id="FungiDB:Afu8g00380"/>
<dbReference type="eggNOG" id="ENOG502SJ7B">
    <property type="taxonomic scope" value="Eukaryota"/>
</dbReference>
<dbReference type="HOGENOM" id="CLU_048587_1_1_1"/>
<dbReference type="InParanoid" id="Q4WAY4"/>
<dbReference type="OMA" id="FMARHPM"/>
<dbReference type="OrthoDB" id="2498029at2759"/>
<dbReference type="BioCyc" id="MetaCyc:MONOMER-124251"/>
<dbReference type="UniPathway" id="UPA00213"/>
<dbReference type="Proteomes" id="UP000002530">
    <property type="component" value="Chromosome 8"/>
</dbReference>
<dbReference type="GO" id="GO:0016787">
    <property type="term" value="F:hydrolase activity"/>
    <property type="evidence" value="ECO:0000318"/>
    <property type="project" value="GO_Central"/>
</dbReference>
<dbReference type="GO" id="GO:0016740">
    <property type="term" value="F:transferase activity"/>
    <property type="evidence" value="ECO:0007669"/>
    <property type="project" value="UniProtKB-KW"/>
</dbReference>
<dbReference type="GO" id="GO:1902086">
    <property type="term" value="P:fumagillin biosynthetic process"/>
    <property type="evidence" value="ECO:0000317"/>
    <property type="project" value="AspGD"/>
</dbReference>
<dbReference type="GO" id="GO:0016114">
    <property type="term" value="P:terpenoid biosynthetic process"/>
    <property type="evidence" value="ECO:0007669"/>
    <property type="project" value="UniProtKB-UniPathway"/>
</dbReference>
<dbReference type="Gene3D" id="1.10.10.800">
    <property type="match status" value="1"/>
</dbReference>
<dbReference type="Gene3D" id="3.40.50.1820">
    <property type="entry name" value="alpha/beta hydrolase"/>
    <property type="match status" value="1"/>
</dbReference>
<dbReference type="InterPro" id="IPR029058">
    <property type="entry name" value="AB_hydrolase_fold"/>
</dbReference>
<dbReference type="InterPro" id="IPR022742">
    <property type="entry name" value="Hydrolase_4"/>
</dbReference>
<dbReference type="InterPro" id="IPR051411">
    <property type="entry name" value="Polyketide_trans_af380"/>
</dbReference>
<dbReference type="PANTHER" id="PTHR47751:SF2">
    <property type="entry name" value="DLTD N-TERMINAL DOMAIN PROTEIN (AFU_ORTHOLOGUE AFUA_8G00380)-RELATED"/>
    <property type="match status" value="1"/>
</dbReference>
<dbReference type="PANTHER" id="PTHR47751">
    <property type="entry name" value="SUPERFAMILY HYDROLASE, PUTATIVE (AFU_ORTHOLOGUE AFUA_2G16580)-RELATED"/>
    <property type="match status" value="1"/>
</dbReference>
<dbReference type="Pfam" id="PF12146">
    <property type="entry name" value="Hydrolase_4"/>
    <property type="match status" value="1"/>
</dbReference>
<dbReference type="SUPFAM" id="SSF53474">
    <property type="entry name" value="alpha/beta-Hydrolases"/>
    <property type="match status" value="1"/>
</dbReference>
<name>FMAC_ASPFU</name>
<keyword id="KW-1185">Reference proteome</keyword>
<keyword id="KW-0808">Transferase</keyword>
<accession>Q4WAY4</accession>
<reference key="1">
    <citation type="journal article" date="2005" name="Nature">
        <title>Genomic sequence of the pathogenic and allergenic filamentous fungus Aspergillus fumigatus.</title>
        <authorList>
            <person name="Nierman W.C."/>
            <person name="Pain A."/>
            <person name="Anderson M.J."/>
            <person name="Wortman J.R."/>
            <person name="Kim H.S."/>
            <person name="Arroyo J."/>
            <person name="Berriman M."/>
            <person name="Abe K."/>
            <person name="Archer D.B."/>
            <person name="Bermejo C."/>
            <person name="Bennett J.W."/>
            <person name="Bowyer P."/>
            <person name="Chen D."/>
            <person name="Collins M."/>
            <person name="Coulsen R."/>
            <person name="Davies R."/>
            <person name="Dyer P.S."/>
            <person name="Farman M.L."/>
            <person name="Fedorova N."/>
            <person name="Fedorova N.D."/>
            <person name="Feldblyum T.V."/>
            <person name="Fischer R."/>
            <person name="Fosker N."/>
            <person name="Fraser A."/>
            <person name="Garcia J.L."/>
            <person name="Garcia M.J."/>
            <person name="Goble A."/>
            <person name="Goldman G.H."/>
            <person name="Gomi K."/>
            <person name="Griffith-Jones S."/>
            <person name="Gwilliam R."/>
            <person name="Haas B.J."/>
            <person name="Haas H."/>
            <person name="Harris D.E."/>
            <person name="Horiuchi H."/>
            <person name="Huang J."/>
            <person name="Humphray S."/>
            <person name="Jimenez J."/>
            <person name="Keller N."/>
            <person name="Khouri H."/>
            <person name="Kitamoto K."/>
            <person name="Kobayashi T."/>
            <person name="Konzack S."/>
            <person name="Kulkarni R."/>
            <person name="Kumagai T."/>
            <person name="Lafton A."/>
            <person name="Latge J.-P."/>
            <person name="Li W."/>
            <person name="Lord A."/>
            <person name="Lu C."/>
            <person name="Majoros W.H."/>
            <person name="May G.S."/>
            <person name="Miller B.L."/>
            <person name="Mohamoud Y."/>
            <person name="Molina M."/>
            <person name="Monod M."/>
            <person name="Mouyna I."/>
            <person name="Mulligan S."/>
            <person name="Murphy L.D."/>
            <person name="O'Neil S."/>
            <person name="Paulsen I."/>
            <person name="Penalva M.A."/>
            <person name="Pertea M."/>
            <person name="Price C."/>
            <person name="Pritchard B.L."/>
            <person name="Quail M.A."/>
            <person name="Rabbinowitsch E."/>
            <person name="Rawlins N."/>
            <person name="Rajandream M.A."/>
            <person name="Reichard U."/>
            <person name="Renauld H."/>
            <person name="Robson G.D."/>
            <person name="Rodriguez de Cordoba S."/>
            <person name="Rodriguez-Pena J.M."/>
            <person name="Ronning C.M."/>
            <person name="Rutter S."/>
            <person name="Salzberg S.L."/>
            <person name="Sanchez M."/>
            <person name="Sanchez-Ferrero J.C."/>
            <person name="Saunders D."/>
            <person name="Seeger K."/>
            <person name="Squares R."/>
            <person name="Squares S."/>
            <person name="Takeuchi M."/>
            <person name="Tekaia F."/>
            <person name="Turner G."/>
            <person name="Vazquez de Aldana C.R."/>
            <person name="Weidman J."/>
            <person name="White O."/>
            <person name="Woodward J.R."/>
            <person name="Yu J.-H."/>
            <person name="Fraser C.M."/>
            <person name="Galagan J.E."/>
            <person name="Asai K."/>
            <person name="Machida M."/>
            <person name="Hall N."/>
            <person name="Barrell B.G."/>
            <person name="Denning D.W."/>
        </authorList>
    </citation>
    <scope>NUCLEOTIDE SEQUENCE [LARGE SCALE GENOMIC DNA]</scope>
    <source>
        <strain>ATCC MYA-4609 / CBS 101355 / FGSC A1100 / Af293</strain>
    </source>
</reference>
<reference key="2">
    <citation type="journal article" date="1952" name="Science">
        <title>The treatment of amebiasis with fumagillin.</title>
        <authorList>
            <person name="Killough J.H."/>
            <person name="Magill G.B."/>
            <person name="Smith R.C."/>
        </authorList>
    </citation>
    <scope>BIOTECHNOLOGY</scope>
</reference>
<reference key="3">
    <citation type="journal article" date="1997" name="Proc. Natl. Acad. Sci. U.S.A.">
        <title>The anti-angiogenic agent fumagillin covalently binds and inhibits the methionine aminopeptidase, MetAP-2.</title>
        <authorList>
            <person name="Sin N."/>
            <person name="Meng L."/>
            <person name="Wang M.Q."/>
            <person name="Wen J.J."/>
            <person name="Bornmann W.G."/>
            <person name="Crews C.M."/>
        </authorList>
    </citation>
    <scope>BIOTECHNOLOGY</scope>
</reference>
<reference key="4">
    <citation type="journal article" date="2002" name="N. Engl. J. Med.">
        <title>Fumagillin treatment of intestinal microsporidiosis.</title>
        <authorList>
            <consortium name="Agence Nationale de Recherches sur le SIDA 090 Study Group"/>
            <person name="Molina J.M."/>
            <person name="Tourneur M."/>
            <person name="Sarfati C."/>
            <person name="Chevret S."/>
            <person name="de Gouvello A."/>
            <person name="Gobert J.G."/>
            <person name="Balkan S."/>
            <person name="Derouin F."/>
        </authorList>
    </citation>
    <scope>BIOTECHNOLOGY</scope>
</reference>
<reference key="5">
    <citation type="journal article" date="2008" name="Inflamm. Res.">
        <title>An inhibitor of methionine aminopeptidase type-2, PPI-2458, ameliorates the pathophysiological disease processes of rheumatoid arthritis.</title>
        <authorList>
            <person name="Lazarus D.D."/>
            <person name="Doyle E.G."/>
            <person name="Bernier S.G."/>
            <person name="Rogers A.B."/>
            <person name="Labenski M.T."/>
            <person name="Wakefield J.D."/>
            <person name="Karp R.M."/>
            <person name="Clark E.J."/>
            <person name="Lorusso J."/>
            <person name="Hoyt J.G."/>
            <person name="Thompson C.D."/>
            <person name="Hannig G."/>
            <person name="Westlin W.F."/>
        </authorList>
    </citation>
    <scope>BIOTECHNOLOGY</scope>
</reference>
<reference key="6">
    <citation type="journal article" date="2013" name="J. Am. Chem. Soc.">
        <title>The fumagillin biosynthetic gene cluster in Aspergillus fumigatus encodes a cryptic terpene cyclase involved in the formation of beta-trans-bergamotene.</title>
        <authorList>
            <person name="Lin H.C."/>
            <person name="Chooi Y.H."/>
            <person name="Dhingra S."/>
            <person name="Xu W."/>
            <person name="Calvo A.M."/>
            <person name="Tang Y."/>
        </authorList>
    </citation>
    <scope>FUNCTION</scope>
    <scope>CATALYTIC ACTIVITY</scope>
</reference>
<reference key="7">
    <citation type="journal article" date="2013" name="PLoS ONE">
        <title>The fumagillin gene cluster, an example of hundreds of genes under veA control in Aspergillus fumigatus.</title>
        <authorList>
            <person name="Dhingra S."/>
            <person name="Lind A.L."/>
            <person name="Lin H.C."/>
            <person name="Tang Y."/>
            <person name="Rokas A."/>
            <person name="Calvo A.M."/>
        </authorList>
    </citation>
    <scope>INDUCTION</scope>
</reference>
<reference key="8">
    <citation type="journal article" date="2013" name="Proc. Natl. Acad. Sci. U.S.A.">
        <title>Prototype of an intertwined secondary-metabolite supercluster.</title>
        <authorList>
            <person name="Wiemann P."/>
            <person name="Guo C.J."/>
            <person name="Palmer J.M."/>
            <person name="Sekonyela R."/>
            <person name="Wang C.C."/>
            <person name="Keller N.P."/>
        </authorList>
    </citation>
    <scope>IDENTIFICATION</scope>
    <scope>INDUCTION</scope>
    <scope>DISRUPTION PHENOTYPE</scope>
</reference>
<reference key="9">
    <citation type="journal article" date="2014" name="J. Am. Chem. Soc.">
        <title>Generation of complexity in fungal terpene biosynthesis: discovery of a multifunctional cytochrome P450 in the fumagillin pathway.</title>
        <authorList>
            <person name="Lin H.C."/>
            <person name="Tsunematsu Y."/>
            <person name="Dhingra S."/>
            <person name="Xu W."/>
            <person name="Fukutomi M."/>
            <person name="Chooi Y.H."/>
            <person name="Cane D.E."/>
            <person name="Calvo A.M."/>
            <person name="Watanabe K."/>
            <person name="Tang Y."/>
        </authorList>
    </citation>
    <scope>FUNCTION</scope>
</reference>
<comment type="function">
    <text evidence="5 8 13">Polyketide transferase; part of the gene cluster that mediates the biosynthesis of fumagillin, a meroterpenoid that has numerous biological activities including irreversible inhibition of human type 2 methionine aminopeptidase (METAP2) (PubMed:23488861, PubMed:24568283). Within the pathway, the polyketide transferase af380 catalyzes the transfer of a dodecapentaenoyl group synthesized by the polyketide synthase af370 onto 5R-hydroxy-seco-sesquiterpene to produce prefumagillin (PubMed:23488861). The pathway begins with the conversion of farnesyl pyrophosphate (FPP) to beta-trans-bergamotene by the membrane-bound beta-trans-bergamotene synthase af520. The multifunctional cytochrome P450 monooxygenase af510 then converts beta-trans-bergamotene into 5-keto-demethoxyfumagillol via several oxydation steps. 5-keto-demethoxyfumagillol is then subjected to successive C-6 hydroxylation and O-methylation by the dioxygenase af480 and O-methyltransferase af390-400, respectively, to yield 5-keto-fumagillol, which is then stereoselectively reduced by the keto-reductase af490 to 5R-hydroxy-seco-sesquiterpene. The next step is the polyketide transferase af380-catalyzed transfer of a dodecapentaenoyl group synthesized by the polyketide synthase af370 onto 5R-hydroxy-seco-sesquiterpene which leads to the production of prefumagillin. Finally, oxidative cleavage by the monooxygenase af470 converts prefumagillin to fumagillin (Probable) (PubMed:24568283).</text>
</comment>
<comment type="catalytic activity">
    <reaction evidence="5">
        <text>fumagillol + dodecapentaneoyl-[polyketide synthase] = prefumagillin + holo-[polyketide synthase]</text>
        <dbReference type="Rhea" id="RHEA:74751"/>
        <dbReference type="Rhea" id="RHEA-COMP:18421"/>
        <dbReference type="Rhea" id="RHEA-COMP:18432"/>
        <dbReference type="ChEBI" id="CHEBI:64479"/>
        <dbReference type="ChEBI" id="CHEBI:193519"/>
        <dbReference type="ChEBI" id="CHEBI:193520"/>
        <dbReference type="ChEBI" id="CHEBI:324935"/>
    </reaction>
    <physiologicalReaction direction="left-to-right" evidence="5">
        <dbReference type="Rhea" id="RHEA:74752"/>
    </physiologicalReaction>
</comment>
<comment type="pathway">
    <text evidence="5">Secondary metabolite biosynthesis; terpenoid biosynthesis.</text>
</comment>
<comment type="induction">
    <text evidence="6 7">Expression is controlled by the fumagillin biosynthesis cluster regulator fumR (PubMed:24082142). Expression is also under the control of the developmental and secondary metabolism regulator veA (PubMed:24116213).</text>
</comment>
<comment type="disruption phenotype">
    <text evidence="6">Completely abolishes the production of fumagillin (PubMed:24082142).</text>
</comment>
<comment type="biotechnology">
    <text evidence="2 3 4 9">Fumagillin and its derivatives have been intensely studied for their potential use in the treatment of amebiasis, microsporidiosis and rheumatoid arthritis (PubMed:12075057, PubMed:14913169, PubMed:18209961). They have also interesting antiangiogenic properties by the irreversible inhibition of human type 2 methionine aminopeptidase (METAP2) (PubMed:9177176).</text>
</comment>
<comment type="similarity">
    <text evidence="12">Belongs to the polyketide transferase af380 family.</text>
</comment>
<proteinExistence type="evidence at protein level"/>